<reference key="1">
    <citation type="journal article" date="2005" name="Jpn. Agric. Res. Q.">
        <title>Genome sequence of Xanthomonas oryzae pv. oryzae suggests contribution of large numbers of effector genes and insertion sequences to its race diversity.</title>
        <authorList>
            <person name="Ochiai H."/>
            <person name="Inoue Y."/>
            <person name="Takeya M."/>
            <person name="Sasaki A."/>
            <person name="Kaku H."/>
        </authorList>
    </citation>
    <scope>NUCLEOTIDE SEQUENCE [LARGE SCALE GENOMIC DNA]</scope>
    <source>
        <strain>MAFF 311018</strain>
    </source>
</reference>
<gene>
    <name evidence="1" type="primary">fabH</name>
    <name type="ordered locus">XOO0803</name>
</gene>
<protein>
    <recommendedName>
        <fullName evidence="1">Beta-ketoacyl-[acyl-carrier-protein] synthase III</fullName>
        <shortName evidence="1">Beta-ketoacyl-ACP synthase III</shortName>
        <shortName evidence="1">KAS III</shortName>
        <ecNumber evidence="1">2.3.1.180</ecNumber>
    </recommendedName>
    <alternativeName>
        <fullName evidence="1">3-oxoacyl-[acyl-carrier-protein] synthase 3</fullName>
    </alternativeName>
    <alternativeName>
        <fullName evidence="1">3-oxoacyl-[acyl-carrier-protein] synthase III</fullName>
    </alternativeName>
</protein>
<dbReference type="EC" id="2.3.1.180" evidence="1"/>
<dbReference type="EMBL" id="AP008229">
    <property type="protein sequence ID" value="BAE67558.1"/>
    <property type="molecule type" value="Genomic_DNA"/>
</dbReference>
<dbReference type="RefSeq" id="WP_011257752.1">
    <property type="nucleotide sequence ID" value="NC_007705.1"/>
</dbReference>
<dbReference type="SMR" id="Q2P7B9"/>
<dbReference type="KEGG" id="xom:XOO0803"/>
<dbReference type="HOGENOM" id="CLU_039592_3_1_6"/>
<dbReference type="UniPathway" id="UPA00094"/>
<dbReference type="GO" id="GO:0005737">
    <property type="term" value="C:cytoplasm"/>
    <property type="evidence" value="ECO:0007669"/>
    <property type="project" value="UniProtKB-SubCell"/>
</dbReference>
<dbReference type="GO" id="GO:0004315">
    <property type="term" value="F:3-oxoacyl-[acyl-carrier-protein] synthase activity"/>
    <property type="evidence" value="ECO:0007669"/>
    <property type="project" value="InterPro"/>
</dbReference>
<dbReference type="GO" id="GO:0033818">
    <property type="term" value="F:beta-ketoacyl-acyl-carrier-protein synthase III activity"/>
    <property type="evidence" value="ECO:0007669"/>
    <property type="project" value="UniProtKB-UniRule"/>
</dbReference>
<dbReference type="GO" id="GO:0006633">
    <property type="term" value="P:fatty acid biosynthetic process"/>
    <property type="evidence" value="ECO:0007669"/>
    <property type="project" value="UniProtKB-UniRule"/>
</dbReference>
<dbReference type="CDD" id="cd00830">
    <property type="entry name" value="KAS_III"/>
    <property type="match status" value="1"/>
</dbReference>
<dbReference type="FunFam" id="3.40.47.10:FF:000004">
    <property type="entry name" value="3-oxoacyl-[acyl-carrier-protein] synthase 3"/>
    <property type="match status" value="1"/>
</dbReference>
<dbReference type="Gene3D" id="3.40.47.10">
    <property type="match status" value="1"/>
</dbReference>
<dbReference type="HAMAP" id="MF_01815">
    <property type="entry name" value="FabH"/>
    <property type="match status" value="1"/>
</dbReference>
<dbReference type="InterPro" id="IPR013747">
    <property type="entry name" value="ACP_syn_III_C"/>
</dbReference>
<dbReference type="InterPro" id="IPR013751">
    <property type="entry name" value="ACP_syn_III_N"/>
</dbReference>
<dbReference type="InterPro" id="IPR004655">
    <property type="entry name" value="FabH"/>
</dbReference>
<dbReference type="InterPro" id="IPR016039">
    <property type="entry name" value="Thiolase-like"/>
</dbReference>
<dbReference type="NCBIfam" id="TIGR00747">
    <property type="entry name" value="fabH"/>
    <property type="match status" value="1"/>
</dbReference>
<dbReference type="NCBIfam" id="NF006829">
    <property type="entry name" value="PRK09352.1"/>
    <property type="match status" value="1"/>
</dbReference>
<dbReference type="PANTHER" id="PTHR43091">
    <property type="entry name" value="3-OXOACYL-[ACYL-CARRIER-PROTEIN] SYNTHASE"/>
    <property type="match status" value="1"/>
</dbReference>
<dbReference type="PANTHER" id="PTHR43091:SF1">
    <property type="entry name" value="BETA-KETOACYL-[ACYL-CARRIER-PROTEIN] SYNTHASE III, CHLOROPLASTIC"/>
    <property type="match status" value="1"/>
</dbReference>
<dbReference type="Pfam" id="PF08545">
    <property type="entry name" value="ACP_syn_III"/>
    <property type="match status" value="1"/>
</dbReference>
<dbReference type="Pfam" id="PF08541">
    <property type="entry name" value="ACP_syn_III_C"/>
    <property type="match status" value="1"/>
</dbReference>
<dbReference type="SUPFAM" id="SSF53901">
    <property type="entry name" value="Thiolase-like"/>
    <property type="match status" value="1"/>
</dbReference>
<feature type="chain" id="PRO_1000056445" description="Beta-ketoacyl-[acyl-carrier-protein] synthase III">
    <location>
        <begin position="1"/>
        <end position="325"/>
    </location>
</feature>
<feature type="region of interest" description="ACP-binding" evidence="1">
    <location>
        <begin position="253"/>
        <end position="257"/>
    </location>
</feature>
<feature type="active site" evidence="1">
    <location>
        <position position="116"/>
    </location>
</feature>
<feature type="active site" evidence="1">
    <location>
        <position position="252"/>
    </location>
</feature>
<feature type="active site" evidence="1">
    <location>
        <position position="282"/>
    </location>
</feature>
<proteinExistence type="inferred from homology"/>
<comment type="function">
    <text evidence="1">Catalyzes the condensation reaction of fatty acid synthesis by the addition to an acyl acceptor of two carbons from malonyl-ACP. Catalyzes the first condensation reaction which initiates fatty acid synthesis and may therefore play a role in governing the total rate of fatty acid production. Possesses both acetoacetyl-ACP synthase and acetyl transacylase activities. Its substrate specificity determines the biosynthesis of branched-chain and/or straight-chain of fatty acids.</text>
</comment>
<comment type="catalytic activity">
    <reaction evidence="1">
        <text>malonyl-[ACP] + acetyl-CoA + H(+) = 3-oxobutanoyl-[ACP] + CO2 + CoA</text>
        <dbReference type="Rhea" id="RHEA:12080"/>
        <dbReference type="Rhea" id="RHEA-COMP:9623"/>
        <dbReference type="Rhea" id="RHEA-COMP:9625"/>
        <dbReference type="ChEBI" id="CHEBI:15378"/>
        <dbReference type="ChEBI" id="CHEBI:16526"/>
        <dbReference type="ChEBI" id="CHEBI:57287"/>
        <dbReference type="ChEBI" id="CHEBI:57288"/>
        <dbReference type="ChEBI" id="CHEBI:78449"/>
        <dbReference type="ChEBI" id="CHEBI:78450"/>
        <dbReference type="EC" id="2.3.1.180"/>
    </reaction>
</comment>
<comment type="pathway">
    <text evidence="1">Lipid metabolism; fatty acid biosynthesis.</text>
</comment>
<comment type="subunit">
    <text evidence="1">Homodimer.</text>
</comment>
<comment type="subcellular location">
    <subcellularLocation>
        <location evidence="1">Cytoplasm</location>
    </subcellularLocation>
</comment>
<comment type="domain">
    <text evidence="1">The last Arg residue of the ACP-binding site is essential for the weak association between ACP/AcpP and FabH.</text>
</comment>
<comment type="similarity">
    <text evidence="1">Belongs to the thiolase-like superfamily. FabH family.</text>
</comment>
<evidence type="ECO:0000255" key="1">
    <source>
        <dbReference type="HAMAP-Rule" id="MF_01815"/>
    </source>
</evidence>
<name>FABH_XANOM</name>
<sequence length="325" mass="34657">MSKRIYSRIAGTGSYLPEKVLTNDDMSKIVDTSDEWIFSRTGIRERHIAADDQATSDLAYFASLKAMEAAGVTADEIDLIVIGTTTPDLIFPSTACLLQARLGNVGCGAMDVNAACSGFVYALSVADKFVRSGDAKTVLVVGAETLTRILDWTDRTTCVLFGDGAGAVILKADEETGILSTHLRADGSKKELLWDPVGVSVGFGEGKNGGGALLMKGNDVFKYAVKALNSVVDETLAANGYDAHDLDWLIPHQANLRIIEATAKRLDLPMEQVVVTVDRHGNTSSASVPLALDEAVRSGRVQRGQLLLLEAFGGGFAWGSALLRY</sequence>
<keyword id="KW-0012">Acyltransferase</keyword>
<keyword id="KW-0963">Cytoplasm</keyword>
<keyword id="KW-0275">Fatty acid biosynthesis</keyword>
<keyword id="KW-0276">Fatty acid metabolism</keyword>
<keyword id="KW-0444">Lipid biosynthesis</keyword>
<keyword id="KW-0443">Lipid metabolism</keyword>
<keyword id="KW-0511">Multifunctional enzyme</keyword>
<keyword id="KW-0808">Transferase</keyword>
<organism>
    <name type="scientific">Xanthomonas oryzae pv. oryzae (strain MAFF 311018)</name>
    <dbReference type="NCBI Taxonomy" id="342109"/>
    <lineage>
        <taxon>Bacteria</taxon>
        <taxon>Pseudomonadati</taxon>
        <taxon>Pseudomonadota</taxon>
        <taxon>Gammaproteobacteria</taxon>
        <taxon>Lysobacterales</taxon>
        <taxon>Lysobacteraceae</taxon>
        <taxon>Xanthomonas</taxon>
    </lineage>
</organism>
<accession>Q2P7B9</accession>